<name>TSG6_RABIT</name>
<accession>P98065</accession>
<feature type="signal peptide" evidence="3">
    <location>
        <begin position="1"/>
        <end position="17"/>
    </location>
</feature>
<feature type="chain" id="PRO_0000026694" description="Tumor necrosis factor-inducible gene 6 protein" evidence="3">
    <location>
        <begin position="18"/>
        <end position="276"/>
    </location>
</feature>
<feature type="domain" description="Link" evidence="5">
    <location>
        <begin position="36"/>
        <end position="129"/>
    </location>
</feature>
<feature type="domain" description="CUB" evidence="4">
    <location>
        <begin position="135"/>
        <end position="247"/>
    </location>
</feature>
<feature type="binding site" evidence="2">
    <location>
        <position position="183"/>
    </location>
    <ligand>
        <name>Ca(2+)</name>
        <dbReference type="ChEBI" id="CHEBI:29108"/>
    </ligand>
</feature>
<feature type="binding site" evidence="2">
    <location>
        <position position="191"/>
    </location>
    <ligand>
        <name>Ca(2+)</name>
        <dbReference type="ChEBI" id="CHEBI:29108"/>
    </ligand>
</feature>
<feature type="binding site" evidence="2">
    <location>
        <position position="232"/>
    </location>
    <ligand>
        <name>Ca(2+)</name>
        <dbReference type="ChEBI" id="CHEBI:29108"/>
    </ligand>
</feature>
<feature type="binding site" evidence="2">
    <location>
        <position position="234"/>
    </location>
    <ligand>
        <name>Ca(2+)</name>
        <dbReference type="ChEBI" id="CHEBI:29108"/>
    </ligand>
</feature>
<feature type="binding site" evidence="2">
    <location>
        <position position="235"/>
    </location>
    <ligand>
        <name>Ca(2+)</name>
        <dbReference type="ChEBI" id="CHEBI:29108"/>
    </ligand>
</feature>
<feature type="glycosylation site" description="N-linked (GlcNAc...) asparagine" evidence="3">
    <location>
        <position position="118"/>
    </location>
</feature>
<feature type="glycosylation site" description="N-linked (GlcNAc...) asparagine" evidence="3">
    <location>
        <position position="258"/>
    </location>
</feature>
<feature type="disulfide bond" evidence="5">
    <location>
        <begin position="58"/>
        <end position="127"/>
    </location>
</feature>
<feature type="disulfide bond" evidence="5">
    <location>
        <begin position="82"/>
        <end position="103"/>
    </location>
</feature>
<feature type="disulfide bond" evidence="4">
    <location>
        <begin position="135"/>
        <end position="161"/>
    </location>
</feature>
<feature type="disulfide bond" evidence="4">
    <location>
        <begin position="188"/>
        <end position="210"/>
    </location>
</feature>
<dbReference type="EC" id="3.1.1.-" evidence="2"/>
<dbReference type="EMBL" id="M86381">
    <property type="protein sequence ID" value="AAA03342.1"/>
    <property type="molecule type" value="mRNA"/>
</dbReference>
<dbReference type="PIR" id="A48055">
    <property type="entry name" value="A47290"/>
</dbReference>
<dbReference type="RefSeq" id="NP_001075780.1">
    <property type="nucleotide sequence ID" value="NM_001082311.1"/>
</dbReference>
<dbReference type="BMRB" id="P98065"/>
<dbReference type="SMR" id="P98065"/>
<dbReference type="FunCoup" id="P98065">
    <property type="interactions" value="286"/>
</dbReference>
<dbReference type="STRING" id="9986.ENSOCUP00000011779"/>
<dbReference type="GlyCosmos" id="P98065">
    <property type="glycosylation" value="2 sites, No reported glycans"/>
</dbReference>
<dbReference type="PaxDb" id="9986-ENSOCUP00000011779"/>
<dbReference type="Ensembl" id="ENSOCUT00000013688.2">
    <property type="protein sequence ID" value="ENSOCUP00000011779.2"/>
    <property type="gene ID" value="ENSOCUG00000013688.2"/>
</dbReference>
<dbReference type="GeneID" id="100009149"/>
<dbReference type="KEGG" id="ocu:100009149"/>
<dbReference type="CTD" id="7130"/>
<dbReference type="eggNOG" id="KOG1218">
    <property type="taxonomic scope" value="Eukaryota"/>
</dbReference>
<dbReference type="eggNOG" id="KOG3714">
    <property type="taxonomic scope" value="Eukaryota"/>
</dbReference>
<dbReference type="GeneTree" id="ENSGT00940000157201"/>
<dbReference type="HOGENOM" id="CLU_092089_0_0_1"/>
<dbReference type="InParanoid" id="P98065"/>
<dbReference type="OMA" id="IGFHMCA"/>
<dbReference type="OrthoDB" id="6369184at2759"/>
<dbReference type="TreeFam" id="TF334173"/>
<dbReference type="Proteomes" id="UP000001811">
    <property type="component" value="Chromosome 7"/>
</dbReference>
<dbReference type="Bgee" id="ENSOCUG00000013688">
    <property type="expression patterns" value="Expressed in ovary and 11 other cell types or tissues"/>
</dbReference>
<dbReference type="GO" id="GO:0005576">
    <property type="term" value="C:extracellular region"/>
    <property type="evidence" value="ECO:0000250"/>
    <property type="project" value="UniProtKB"/>
</dbReference>
<dbReference type="GO" id="GO:0005615">
    <property type="term" value="C:extracellular space"/>
    <property type="evidence" value="ECO:0007669"/>
    <property type="project" value="TreeGrafter"/>
</dbReference>
<dbReference type="GO" id="GO:0005509">
    <property type="term" value="F:calcium ion binding"/>
    <property type="evidence" value="ECO:0000250"/>
    <property type="project" value="UniProtKB"/>
</dbReference>
<dbReference type="GO" id="GO:0106435">
    <property type="term" value="F:carboxylesterase activity"/>
    <property type="evidence" value="ECO:0007669"/>
    <property type="project" value="Ensembl"/>
</dbReference>
<dbReference type="GO" id="GO:0001968">
    <property type="term" value="F:fibronectin binding"/>
    <property type="evidence" value="ECO:0000250"/>
    <property type="project" value="UniProtKB"/>
</dbReference>
<dbReference type="GO" id="GO:0005540">
    <property type="term" value="F:hyaluronic acid binding"/>
    <property type="evidence" value="ECO:0000250"/>
    <property type="project" value="UniProtKB"/>
</dbReference>
<dbReference type="GO" id="GO:0007155">
    <property type="term" value="P:cell adhesion"/>
    <property type="evidence" value="ECO:0007669"/>
    <property type="project" value="UniProtKB-KW"/>
</dbReference>
<dbReference type="GO" id="GO:1905590">
    <property type="term" value="P:fibronectin fibril organization"/>
    <property type="evidence" value="ECO:0000250"/>
    <property type="project" value="UniProtKB"/>
</dbReference>
<dbReference type="GO" id="GO:0030212">
    <property type="term" value="P:hyaluronan metabolic process"/>
    <property type="evidence" value="ECO:0000250"/>
    <property type="project" value="UniProtKB"/>
</dbReference>
<dbReference type="GO" id="GO:0030514">
    <property type="term" value="P:negative regulation of BMP signaling pathway"/>
    <property type="evidence" value="ECO:0000250"/>
    <property type="project" value="UniProtKB"/>
</dbReference>
<dbReference type="GO" id="GO:0050728">
    <property type="term" value="P:negative regulation of inflammatory response"/>
    <property type="evidence" value="ECO:0007669"/>
    <property type="project" value="Ensembl"/>
</dbReference>
<dbReference type="GO" id="GO:0090024">
    <property type="term" value="P:negative regulation of neutrophil chemotaxis"/>
    <property type="evidence" value="ECO:0000250"/>
    <property type="project" value="UniProtKB"/>
</dbReference>
<dbReference type="GO" id="GO:0045668">
    <property type="term" value="P:negative regulation of osteoblast differentiation"/>
    <property type="evidence" value="ECO:0000250"/>
    <property type="project" value="UniProtKB"/>
</dbReference>
<dbReference type="GO" id="GO:0045671">
    <property type="term" value="P:negative regulation of osteoclast differentiation"/>
    <property type="evidence" value="ECO:0000250"/>
    <property type="project" value="UniProtKB"/>
</dbReference>
<dbReference type="GO" id="GO:0001550">
    <property type="term" value="P:ovarian cumulus expansion"/>
    <property type="evidence" value="ECO:0000250"/>
    <property type="project" value="UniProtKB"/>
</dbReference>
<dbReference type="GO" id="GO:1903911">
    <property type="term" value="P:positive regulation of receptor clustering"/>
    <property type="evidence" value="ECO:0000250"/>
    <property type="project" value="UniProtKB"/>
</dbReference>
<dbReference type="CDD" id="cd00041">
    <property type="entry name" value="CUB"/>
    <property type="match status" value="1"/>
</dbReference>
<dbReference type="CDD" id="cd03515">
    <property type="entry name" value="Link_domain_TSG_6_like"/>
    <property type="match status" value="1"/>
</dbReference>
<dbReference type="FunFam" id="3.10.100.10:FF:000001">
    <property type="entry name" value="Hyaluronan proteoglycan link protein 1"/>
    <property type="match status" value="1"/>
</dbReference>
<dbReference type="FunFam" id="2.60.120.290:FF:000005">
    <property type="entry name" value="Procollagen C-endopeptidase enhancer 1"/>
    <property type="match status" value="1"/>
</dbReference>
<dbReference type="Gene3D" id="3.10.100.10">
    <property type="entry name" value="Mannose-Binding Protein A, subunit A"/>
    <property type="match status" value="1"/>
</dbReference>
<dbReference type="Gene3D" id="2.60.120.290">
    <property type="entry name" value="Spermadhesin, CUB domain"/>
    <property type="match status" value="1"/>
</dbReference>
<dbReference type="InterPro" id="IPR016186">
    <property type="entry name" value="C-type_lectin-like/link_sf"/>
</dbReference>
<dbReference type="InterPro" id="IPR016187">
    <property type="entry name" value="CTDL_fold"/>
</dbReference>
<dbReference type="InterPro" id="IPR000859">
    <property type="entry name" value="CUB_dom"/>
</dbReference>
<dbReference type="InterPro" id="IPR000538">
    <property type="entry name" value="Link_dom"/>
</dbReference>
<dbReference type="InterPro" id="IPR035914">
    <property type="entry name" value="Sperma_CUB_dom_sf"/>
</dbReference>
<dbReference type="InterPro" id="IPR052129">
    <property type="entry name" value="Spermadhesin-Link_domain"/>
</dbReference>
<dbReference type="PANTHER" id="PTHR46908">
    <property type="entry name" value="CUBILIN-LIKE PROTEIN"/>
    <property type="match status" value="1"/>
</dbReference>
<dbReference type="PANTHER" id="PTHR46908:SF4">
    <property type="entry name" value="TUMOR NECROSIS FACTOR-INDUCIBLE GENE 6 PROTEIN"/>
    <property type="match status" value="1"/>
</dbReference>
<dbReference type="Pfam" id="PF00431">
    <property type="entry name" value="CUB"/>
    <property type="match status" value="1"/>
</dbReference>
<dbReference type="Pfam" id="PF00193">
    <property type="entry name" value="Xlink"/>
    <property type="match status" value="1"/>
</dbReference>
<dbReference type="PRINTS" id="PR01265">
    <property type="entry name" value="LINKMODULE"/>
</dbReference>
<dbReference type="SMART" id="SM00042">
    <property type="entry name" value="CUB"/>
    <property type="match status" value="1"/>
</dbReference>
<dbReference type="SMART" id="SM00445">
    <property type="entry name" value="LINK"/>
    <property type="match status" value="1"/>
</dbReference>
<dbReference type="SUPFAM" id="SSF56436">
    <property type="entry name" value="C-type lectin-like"/>
    <property type="match status" value="1"/>
</dbReference>
<dbReference type="SUPFAM" id="SSF49854">
    <property type="entry name" value="Spermadhesin, CUB domain"/>
    <property type="match status" value="1"/>
</dbReference>
<dbReference type="PROSITE" id="PS01180">
    <property type="entry name" value="CUB"/>
    <property type="match status" value="1"/>
</dbReference>
<dbReference type="PROSITE" id="PS01241">
    <property type="entry name" value="LINK_1"/>
    <property type="match status" value="1"/>
</dbReference>
<dbReference type="PROSITE" id="PS50963">
    <property type="entry name" value="LINK_2"/>
    <property type="match status" value="1"/>
</dbReference>
<keyword id="KW-0106">Calcium</keyword>
<keyword id="KW-0130">Cell adhesion</keyword>
<keyword id="KW-1015">Disulfide bond</keyword>
<keyword id="KW-0325">Glycoprotein</keyword>
<keyword id="KW-0378">Hydrolase</keyword>
<keyword id="KW-0479">Metal-binding</keyword>
<keyword id="KW-1185">Reference proteome</keyword>
<keyword id="KW-0964">Secreted</keyword>
<keyword id="KW-0732">Signal</keyword>
<sequence>MIILIYLFVLVWEEAQGWGFKNGIFHNSIWLEQAAGVYHREARSGKYKLTYAEAKAVCEFEGGRLATYKQLEAARKIGFHVCAAGWMAKGRVGYPIVKPGSNCGFGKTGIIDYGIRLNRSERWDAYCYNPHAKECGGVFTDPKRIFKSPGFPNEYDDNQICYWHIRLKYGQRIHLSFLNFDLEYDPGCLADYVEIYDSYDDVHGFVGRYCGDELPEDIISTGNVMTLKFLSDASVTAGGFQIKYVTVDPASKSSQGKNTSTVSGNKNFLAGRFSHL</sequence>
<proteinExistence type="evidence at transcript level"/>
<comment type="function">
    <text evidence="1 2">Major regulator of extracellular matrix organization during tissue remodeling (By similarity). Catalyzes the transfer of a heavy chain (HC) from inter-alpha-inhibitor (I-alpha-I) complex to hyaluronan. Cleaves the ester bond between the C-terminus of the HC and GalNAc residue of the chondroitin sulfate chain in I-alpha-I complex followed by transesterification of the HC to hyaluronan. In the process, potentiates the antiprotease function of I-alpha-I complex through release of free bikunin (By similarity). Acts as a catalyst in the formation of hyaluronan-HC oligomers and hyaluronan-rich matrix surrounding the cumulus cell-oocyte complex, a necessary step for oocyte fertilization (By similarity). Assembles hyaluronan in pericellular matrices that serve as platforms for receptor clustering and signaling. Enables binding of hyaluronan deposited on the surface of macrophages to LYVE1 on lymphatic endothelium and facilitates macrophage extravasation. Alters hyaluronan binding to functionally latent CD44 on vascular endothelium, switching CD44 into an active state that supports leukocyte rolling (By similarity). Modulates the interaction of chemokines with extracellular matrix components and proteoglycans on endothelial cell surface, likely preventing chemokine gradient formation. In a negative feedback mechanism, may limit excessive neutrophil recruitment at inflammatory sites by antagonizing the association of CXCL8 with glycosaminoglycans on vascular endothelium (By similarity). Has a role in osteogenesis and bone remodeling. Inhibits BMP2-dependent differentiation of mesenchymal stem cell to osteoblasts. Protects against bone erosion during inflammation by inhibiting TNFSF11/RANKL-dependent osteoclast activation (By similarity).</text>
</comment>
<comment type="subunit">
    <text evidence="2">Interacts (via Link domain) with inter-alpha-inhibitor (I-alpha-I) component bikunin. Interacts with ITIH2/HC2; this interaction is required for transesterification of the HC to hyaluronan. Interacts (via Link and CUB domains) with ITIH1. Chondroitin sulfate may be required for the stability of the complex. Interacts (via Link domain) with various C-X-C and C-C chemokines including PF4, CXCL8, CXCL11, CXCL12, CCL2, CCL7, CCL19, CCL21, and CCL27; this interaction interferes with chemokine binding to glycosaminoglycans. Interacts (primarily via Link domain) with BMP2; this interaction is inhibited by hyaluronan. Interacts (via both Link and CUB domains) with TNFSF11. Interacts (via CUB domain) with FN1 (via type III repeats 9-14); this interaction enhances fibronectin fibril assembly. TNFAIP6 may act as a bridging molecule between FN1 and THBS1.</text>
</comment>
<comment type="subcellular location">
    <subcellularLocation>
        <location evidence="2">Secreted</location>
    </subcellularLocation>
</comment>
<comment type="tissue specificity">
    <text evidence="6">Vascular smooth muscle cells.</text>
</comment>
<comment type="developmental stage">
    <text evidence="6">Fetal skeletal muscle, esophagus, kidney, and lung.</text>
</comment>
<comment type="induction">
    <text evidence="6">By serum and growth factors.</text>
</comment>
<comment type="domain">
    <text evidence="2">The Link domain interacts with various extracellular matrix components, including heparin, heparan sulfates, hyaluronan and I-alpha-I complex. It is required for binding to various chemokines.</text>
</comment>
<comment type="domain">
    <text evidence="2">The CUB domain is necessary for calcium ion binding and transesterification reaction. It is required for binding to FN1.</text>
</comment>
<protein>
    <recommendedName>
        <fullName>Tumor necrosis factor-inducible gene 6 protein</fullName>
        <ecNumber evidence="2">3.1.1.-</ecNumber>
    </recommendedName>
    <alternativeName>
        <fullName>Hyaluronate-binding protein PS4</fullName>
    </alternativeName>
    <alternativeName>
        <fullName>TNF-stimulated gene 6 protein</fullName>
        <shortName>TSG-6</shortName>
    </alternativeName>
    <alternativeName>
        <fullName>Tumor necrosis factor alpha-induced protein 6</fullName>
        <shortName>TNF alpha-induced protein 6</shortName>
    </alternativeName>
</protein>
<reference key="1">
    <citation type="journal article" date="1993" name="J. Biol. Chem.">
        <title>Identification of a novel serum and growth factor-inducible gene in vascular smooth muscle cells.</title>
        <authorList>
            <person name="Feng P."/>
            <person name="Liau G."/>
        </authorList>
    </citation>
    <scope>NUCLEOTIDE SEQUENCE [MRNA]</scope>
    <scope>TISSUE SPECIFICITY</scope>
    <scope>DEVELOPMENTAL STAGE</scope>
    <scope>INDUCTION BY GROWTH FACTORS</scope>
    <source>
        <strain>New Zealand white</strain>
    </source>
</reference>
<reference key="2">
    <citation type="journal article" date="1993" name="J. Biol. Chem.">
        <authorList>
            <person name="Feng P."/>
            <person name="Liau G."/>
        </authorList>
    </citation>
    <scope>ERRATUM OF PUBMED:8098034</scope>
</reference>
<gene>
    <name type="primary">TNFAIP6</name>
    <name type="synonym">PS4</name>
    <name type="synonym">TSG6</name>
</gene>
<evidence type="ECO:0000250" key="1">
    <source>
        <dbReference type="UniProtKB" id="O08859"/>
    </source>
</evidence>
<evidence type="ECO:0000250" key="2">
    <source>
        <dbReference type="UniProtKB" id="P98066"/>
    </source>
</evidence>
<evidence type="ECO:0000255" key="3"/>
<evidence type="ECO:0000255" key="4">
    <source>
        <dbReference type="PROSITE-ProRule" id="PRU00059"/>
    </source>
</evidence>
<evidence type="ECO:0000255" key="5">
    <source>
        <dbReference type="PROSITE-ProRule" id="PRU00323"/>
    </source>
</evidence>
<evidence type="ECO:0000269" key="6">
    <source>
    </source>
</evidence>
<organism>
    <name type="scientific">Oryctolagus cuniculus</name>
    <name type="common">Rabbit</name>
    <dbReference type="NCBI Taxonomy" id="9986"/>
    <lineage>
        <taxon>Eukaryota</taxon>
        <taxon>Metazoa</taxon>
        <taxon>Chordata</taxon>
        <taxon>Craniata</taxon>
        <taxon>Vertebrata</taxon>
        <taxon>Euteleostomi</taxon>
        <taxon>Mammalia</taxon>
        <taxon>Eutheria</taxon>
        <taxon>Euarchontoglires</taxon>
        <taxon>Glires</taxon>
        <taxon>Lagomorpha</taxon>
        <taxon>Leporidae</taxon>
        <taxon>Oryctolagus</taxon>
    </lineage>
</organism>